<dbReference type="EC" id="3.6.1.23" evidence="1"/>
<dbReference type="EMBL" id="CP000931">
    <property type="protein sequence ID" value="ABZ75002.1"/>
    <property type="molecule type" value="Genomic_DNA"/>
</dbReference>
<dbReference type="RefSeq" id="WP_012275556.1">
    <property type="nucleotide sequence ID" value="NC_010334.1"/>
</dbReference>
<dbReference type="SMR" id="B0TQK9"/>
<dbReference type="STRING" id="458817.Shal_0427"/>
<dbReference type="KEGG" id="shl:Shal_0427"/>
<dbReference type="eggNOG" id="COG0756">
    <property type="taxonomic scope" value="Bacteria"/>
</dbReference>
<dbReference type="HOGENOM" id="CLU_068508_1_1_6"/>
<dbReference type="OrthoDB" id="9809956at2"/>
<dbReference type="UniPathway" id="UPA00610">
    <property type="reaction ID" value="UER00666"/>
</dbReference>
<dbReference type="Proteomes" id="UP000001317">
    <property type="component" value="Chromosome"/>
</dbReference>
<dbReference type="GO" id="GO:0004170">
    <property type="term" value="F:dUTP diphosphatase activity"/>
    <property type="evidence" value="ECO:0007669"/>
    <property type="project" value="UniProtKB-UniRule"/>
</dbReference>
<dbReference type="GO" id="GO:0000287">
    <property type="term" value="F:magnesium ion binding"/>
    <property type="evidence" value="ECO:0007669"/>
    <property type="project" value="UniProtKB-UniRule"/>
</dbReference>
<dbReference type="GO" id="GO:0006226">
    <property type="term" value="P:dUMP biosynthetic process"/>
    <property type="evidence" value="ECO:0007669"/>
    <property type="project" value="UniProtKB-UniRule"/>
</dbReference>
<dbReference type="GO" id="GO:0046081">
    <property type="term" value="P:dUTP catabolic process"/>
    <property type="evidence" value="ECO:0007669"/>
    <property type="project" value="InterPro"/>
</dbReference>
<dbReference type="CDD" id="cd07557">
    <property type="entry name" value="trimeric_dUTPase"/>
    <property type="match status" value="1"/>
</dbReference>
<dbReference type="FunFam" id="2.70.40.10:FF:000002">
    <property type="entry name" value="dUTP diphosphatase"/>
    <property type="match status" value="1"/>
</dbReference>
<dbReference type="Gene3D" id="2.70.40.10">
    <property type="match status" value="1"/>
</dbReference>
<dbReference type="HAMAP" id="MF_00116">
    <property type="entry name" value="dUTPase_bact"/>
    <property type="match status" value="1"/>
</dbReference>
<dbReference type="InterPro" id="IPR008181">
    <property type="entry name" value="dUTPase"/>
</dbReference>
<dbReference type="InterPro" id="IPR029054">
    <property type="entry name" value="dUTPase-like"/>
</dbReference>
<dbReference type="InterPro" id="IPR036157">
    <property type="entry name" value="dUTPase-like_sf"/>
</dbReference>
<dbReference type="InterPro" id="IPR033704">
    <property type="entry name" value="dUTPase_trimeric"/>
</dbReference>
<dbReference type="NCBIfam" id="TIGR00576">
    <property type="entry name" value="dut"/>
    <property type="match status" value="1"/>
</dbReference>
<dbReference type="NCBIfam" id="NF001862">
    <property type="entry name" value="PRK00601.1"/>
    <property type="match status" value="1"/>
</dbReference>
<dbReference type="PANTHER" id="PTHR11241">
    <property type="entry name" value="DEOXYURIDINE 5'-TRIPHOSPHATE NUCLEOTIDOHYDROLASE"/>
    <property type="match status" value="1"/>
</dbReference>
<dbReference type="PANTHER" id="PTHR11241:SF0">
    <property type="entry name" value="DEOXYURIDINE 5'-TRIPHOSPHATE NUCLEOTIDOHYDROLASE"/>
    <property type="match status" value="1"/>
</dbReference>
<dbReference type="Pfam" id="PF00692">
    <property type="entry name" value="dUTPase"/>
    <property type="match status" value="1"/>
</dbReference>
<dbReference type="SUPFAM" id="SSF51283">
    <property type="entry name" value="dUTPase-like"/>
    <property type="match status" value="1"/>
</dbReference>
<feature type="chain" id="PRO_1000076071" description="Deoxyuridine 5'-triphosphate nucleotidohydrolase">
    <location>
        <begin position="1"/>
        <end position="152"/>
    </location>
</feature>
<feature type="binding site" evidence="1">
    <location>
        <begin position="71"/>
        <end position="73"/>
    </location>
    <ligand>
        <name>substrate</name>
    </ligand>
</feature>
<feature type="binding site" evidence="1">
    <location>
        <position position="84"/>
    </location>
    <ligand>
        <name>substrate</name>
    </ligand>
</feature>
<feature type="binding site" evidence="1">
    <location>
        <begin position="88"/>
        <end position="90"/>
    </location>
    <ligand>
        <name>substrate</name>
    </ligand>
</feature>
<feature type="binding site" evidence="1">
    <location>
        <position position="98"/>
    </location>
    <ligand>
        <name>substrate</name>
    </ligand>
</feature>
<accession>B0TQK9</accession>
<comment type="function">
    <text evidence="1">This enzyme is involved in nucleotide metabolism: it produces dUMP, the immediate precursor of thymidine nucleotides and it decreases the intracellular concentration of dUTP so that uracil cannot be incorporated into DNA.</text>
</comment>
<comment type="catalytic activity">
    <reaction evidence="1">
        <text>dUTP + H2O = dUMP + diphosphate + H(+)</text>
        <dbReference type="Rhea" id="RHEA:10248"/>
        <dbReference type="ChEBI" id="CHEBI:15377"/>
        <dbReference type="ChEBI" id="CHEBI:15378"/>
        <dbReference type="ChEBI" id="CHEBI:33019"/>
        <dbReference type="ChEBI" id="CHEBI:61555"/>
        <dbReference type="ChEBI" id="CHEBI:246422"/>
        <dbReference type="EC" id="3.6.1.23"/>
    </reaction>
</comment>
<comment type="cofactor">
    <cofactor evidence="1">
        <name>Mg(2+)</name>
        <dbReference type="ChEBI" id="CHEBI:18420"/>
    </cofactor>
</comment>
<comment type="pathway">
    <text evidence="1">Pyrimidine metabolism; dUMP biosynthesis; dUMP from dCTP (dUTP route): step 2/2.</text>
</comment>
<comment type="similarity">
    <text evidence="1">Belongs to the dUTPase family.</text>
</comment>
<keyword id="KW-0378">Hydrolase</keyword>
<keyword id="KW-0460">Magnesium</keyword>
<keyword id="KW-0479">Metal-binding</keyword>
<keyword id="KW-0546">Nucleotide metabolism</keyword>
<reference key="1">
    <citation type="submission" date="2008-01" db="EMBL/GenBank/DDBJ databases">
        <title>Complete sequence of Shewanella halifaxensis HAW-EB4.</title>
        <authorList>
            <consortium name="US DOE Joint Genome Institute"/>
            <person name="Copeland A."/>
            <person name="Lucas S."/>
            <person name="Lapidus A."/>
            <person name="Glavina del Rio T."/>
            <person name="Dalin E."/>
            <person name="Tice H."/>
            <person name="Bruce D."/>
            <person name="Goodwin L."/>
            <person name="Pitluck S."/>
            <person name="Sims D."/>
            <person name="Brettin T."/>
            <person name="Detter J.C."/>
            <person name="Han C."/>
            <person name="Kuske C.R."/>
            <person name="Schmutz J."/>
            <person name="Larimer F."/>
            <person name="Land M."/>
            <person name="Hauser L."/>
            <person name="Kyrpides N."/>
            <person name="Kim E."/>
            <person name="Zhao J.-S."/>
            <person name="Richardson P."/>
        </authorList>
    </citation>
    <scope>NUCLEOTIDE SEQUENCE [LARGE SCALE GENOMIC DNA]</scope>
    <source>
        <strain>HAW-EB4</strain>
    </source>
</reference>
<sequence>MKTPIELKILDSRIGTEFPLPAYATPGSAGMDLRAITDTQLVIQPGETVLIPTGIAIHVADPSLAAIILPRSGLGHKHGIVLGNLVGLIDSDYQGPLMVSCWNRGSEPFTIEIGDRLAQLVFVPVVQAEFKLVDEFNQSDRGTGGFGHSGTK</sequence>
<name>DUT_SHEHH</name>
<proteinExistence type="inferred from homology"/>
<gene>
    <name evidence="1" type="primary">dut</name>
    <name type="ordered locus">Shal_0427</name>
</gene>
<organism>
    <name type="scientific">Shewanella halifaxensis (strain HAW-EB4)</name>
    <dbReference type="NCBI Taxonomy" id="458817"/>
    <lineage>
        <taxon>Bacteria</taxon>
        <taxon>Pseudomonadati</taxon>
        <taxon>Pseudomonadota</taxon>
        <taxon>Gammaproteobacteria</taxon>
        <taxon>Alteromonadales</taxon>
        <taxon>Shewanellaceae</taxon>
        <taxon>Shewanella</taxon>
    </lineage>
</organism>
<evidence type="ECO:0000255" key="1">
    <source>
        <dbReference type="HAMAP-Rule" id="MF_00116"/>
    </source>
</evidence>
<protein>
    <recommendedName>
        <fullName evidence="1">Deoxyuridine 5'-triphosphate nucleotidohydrolase</fullName>
        <shortName evidence="1">dUTPase</shortName>
        <ecNumber evidence="1">3.6.1.23</ecNumber>
    </recommendedName>
    <alternativeName>
        <fullName evidence="1">dUTP pyrophosphatase</fullName>
    </alternativeName>
</protein>